<keyword id="KW-0010">Activator</keyword>
<keyword id="KW-0238">DNA-binding</keyword>
<keyword id="KW-1017">Isopeptide bond</keyword>
<keyword id="KW-0539">Nucleus</keyword>
<keyword id="KW-0597">Phosphoprotein</keyword>
<keyword id="KW-1185">Reference proteome</keyword>
<keyword id="KW-0804">Transcription</keyword>
<keyword id="KW-0805">Transcription regulation</keyword>
<keyword id="KW-0832">Ubl conjugation</keyword>
<dbReference type="EMBL" id="BC126845">
    <property type="protein sequence ID" value="AAI26846.1"/>
    <property type="molecule type" value="mRNA"/>
</dbReference>
<dbReference type="RefSeq" id="NP_001073697.1">
    <property type="nucleotide sequence ID" value="NM_001080228.1"/>
</dbReference>
<dbReference type="SMR" id="A1A4R9"/>
<dbReference type="FunCoup" id="A1A4R9">
    <property type="interactions" value="229"/>
</dbReference>
<dbReference type="STRING" id="9913.ENSBTAP00000073737"/>
<dbReference type="PaxDb" id="9913-ENSBTAP00000001651"/>
<dbReference type="GeneID" id="505849"/>
<dbReference type="KEGG" id="bta:505849"/>
<dbReference type="CTD" id="7020"/>
<dbReference type="VEuPathDB" id="HostDB:ENSBTAG00000001250"/>
<dbReference type="eggNOG" id="KOG3811">
    <property type="taxonomic scope" value="Eukaryota"/>
</dbReference>
<dbReference type="HOGENOM" id="CLU_035175_4_1_1"/>
<dbReference type="InParanoid" id="A1A4R9"/>
<dbReference type="OMA" id="RSDCPQM"/>
<dbReference type="OrthoDB" id="6252992at2759"/>
<dbReference type="TreeFam" id="TF313718"/>
<dbReference type="Reactome" id="R-BTA-8864260">
    <property type="pathway name" value="Transcriptional regulation by the AP-2 (TFAP2) family of transcription factors"/>
</dbReference>
<dbReference type="Reactome" id="R-BTA-8866904">
    <property type="pathway name" value="Negative regulation of activity of TFAP2 (AP-2) family transcription factors"/>
</dbReference>
<dbReference type="Reactome" id="R-BTA-8866907">
    <property type="pathway name" value="Activation of the TFAP2 (AP-2) family of transcription factors"/>
</dbReference>
<dbReference type="Reactome" id="R-BTA-8869496">
    <property type="pathway name" value="TFAP2A acts as a transcriptional repressor during retinoic acid induced cell differentiation"/>
</dbReference>
<dbReference type="Reactome" id="R-BTA-9834899">
    <property type="pathway name" value="Specification of the neural plate border"/>
</dbReference>
<dbReference type="Proteomes" id="UP000009136">
    <property type="component" value="Chromosome 23"/>
</dbReference>
<dbReference type="Bgee" id="ENSBTAG00000001250">
    <property type="expression patterns" value="Expressed in corpus epididymis and 73 other cell types or tissues"/>
</dbReference>
<dbReference type="GO" id="GO:0005634">
    <property type="term" value="C:nucleus"/>
    <property type="evidence" value="ECO:0000250"/>
    <property type="project" value="UniProtKB"/>
</dbReference>
<dbReference type="GO" id="GO:0001228">
    <property type="term" value="F:DNA-binding transcription activator activity, RNA polymerase II-specific"/>
    <property type="evidence" value="ECO:0000250"/>
    <property type="project" value="UniProtKB"/>
</dbReference>
<dbReference type="GO" id="GO:0000981">
    <property type="term" value="F:DNA-binding transcription factor activity, RNA polymerase II-specific"/>
    <property type="evidence" value="ECO:0000250"/>
    <property type="project" value="UniProtKB"/>
</dbReference>
<dbReference type="GO" id="GO:0001227">
    <property type="term" value="F:DNA-binding transcription repressor activity, RNA polymerase II-specific"/>
    <property type="evidence" value="ECO:0000250"/>
    <property type="project" value="UniProtKB"/>
</dbReference>
<dbReference type="GO" id="GO:0000978">
    <property type="term" value="F:RNA polymerase II cis-regulatory region sequence-specific DNA binding"/>
    <property type="evidence" value="ECO:0000250"/>
    <property type="project" value="UniProtKB"/>
</dbReference>
<dbReference type="GO" id="GO:0000977">
    <property type="term" value="F:RNA polymerase II transcription regulatory region sequence-specific DNA binding"/>
    <property type="evidence" value="ECO:0000318"/>
    <property type="project" value="GO_Central"/>
</dbReference>
<dbReference type="GO" id="GO:0060349">
    <property type="term" value="P:bone morphogenesis"/>
    <property type="evidence" value="ECO:0000250"/>
    <property type="project" value="UniProtKB"/>
</dbReference>
<dbReference type="GO" id="GO:0071281">
    <property type="term" value="P:cellular response to iron ion"/>
    <property type="evidence" value="ECO:0000250"/>
    <property type="project" value="UniProtKB"/>
</dbReference>
<dbReference type="GO" id="GO:0048701">
    <property type="term" value="P:embryonic cranial skeleton morphogenesis"/>
    <property type="evidence" value="ECO:0000250"/>
    <property type="project" value="UniProtKB"/>
</dbReference>
<dbReference type="GO" id="GO:0035115">
    <property type="term" value="P:embryonic forelimb morphogenesis"/>
    <property type="evidence" value="ECO:0000250"/>
    <property type="project" value="UniProtKB"/>
</dbReference>
<dbReference type="GO" id="GO:0061029">
    <property type="term" value="P:eyelid development in camera-type eye"/>
    <property type="evidence" value="ECO:0000250"/>
    <property type="project" value="UniProtKB"/>
</dbReference>
<dbReference type="GO" id="GO:0042472">
    <property type="term" value="P:inner ear morphogenesis"/>
    <property type="evidence" value="ECO:0000250"/>
    <property type="project" value="UniProtKB"/>
</dbReference>
<dbReference type="GO" id="GO:0001822">
    <property type="term" value="P:kidney development"/>
    <property type="evidence" value="ECO:0000250"/>
    <property type="project" value="UniProtKB"/>
</dbReference>
<dbReference type="GO" id="GO:0043066">
    <property type="term" value="P:negative regulation of apoptotic process"/>
    <property type="evidence" value="ECO:0000250"/>
    <property type="project" value="UniProtKB"/>
</dbReference>
<dbReference type="GO" id="GO:2000378">
    <property type="term" value="P:negative regulation of reactive oxygen species metabolic process"/>
    <property type="evidence" value="ECO:0000250"/>
    <property type="project" value="UniProtKB"/>
</dbReference>
<dbReference type="GO" id="GO:0010944">
    <property type="term" value="P:negative regulation of transcription by competitive promoter binding"/>
    <property type="evidence" value="ECO:0000250"/>
    <property type="project" value="UniProtKB"/>
</dbReference>
<dbReference type="GO" id="GO:0000122">
    <property type="term" value="P:negative regulation of transcription by RNA polymerase II"/>
    <property type="evidence" value="ECO:0000250"/>
    <property type="project" value="UniProtKB"/>
</dbReference>
<dbReference type="GO" id="GO:0007399">
    <property type="term" value="P:nervous system development"/>
    <property type="evidence" value="ECO:0000318"/>
    <property type="project" value="GO_Central"/>
</dbReference>
<dbReference type="GO" id="GO:0021623">
    <property type="term" value="P:oculomotor nerve formation"/>
    <property type="evidence" value="ECO:0000250"/>
    <property type="project" value="UniProtKB"/>
</dbReference>
<dbReference type="GO" id="GO:0003409">
    <property type="term" value="P:optic cup structural organization"/>
    <property type="evidence" value="ECO:0000250"/>
    <property type="project" value="UniProtKB"/>
</dbReference>
<dbReference type="GO" id="GO:0003404">
    <property type="term" value="P:optic vesicle morphogenesis"/>
    <property type="evidence" value="ECO:0000250"/>
    <property type="project" value="UniProtKB"/>
</dbReference>
<dbReference type="GO" id="GO:0030501">
    <property type="term" value="P:positive regulation of bone mineralization"/>
    <property type="evidence" value="ECO:0000250"/>
    <property type="project" value="UniProtKB"/>
</dbReference>
<dbReference type="GO" id="GO:0070172">
    <property type="term" value="P:positive regulation of tooth mineralization"/>
    <property type="evidence" value="ECO:0000250"/>
    <property type="project" value="UniProtKB"/>
</dbReference>
<dbReference type="GO" id="GO:0045944">
    <property type="term" value="P:positive regulation of transcription by RNA polymerase II"/>
    <property type="evidence" value="ECO:0000250"/>
    <property type="project" value="UniProtKB"/>
</dbReference>
<dbReference type="GO" id="GO:0042127">
    <property type="term" value="P:regulation of cell population proliferation"/>
    <property type="evidence" value="ECO:0000318"/>
    <property type="project" value="GO_Central"/>
</dbReference>
<dbReference type="GO" id="GO:0060021">
    <property type="term" value="P:roof of mouth development"/>
    <property type="evidence" value="ECO:0000250"/>
    <property type="project" value="UniProtKB"/>
</dbReference>
<dbReference type="GO" id="GO:0007605">
    <property type="term" value="P:sensory perception of sound"/>
    <property type="evidence" value="ECO:0000250"/>
    <property type="project" value="UniProtKB"/>
</dbReference>
<dbReference type="GO" id="GO:0001501">
    <property type="term" value="P:skeletal system development"/>
    <property type="evidence" value="ECO:0000318"/>
    <property type="project" value="GO_Central"/>
</dbReference>
<dbReference type="GO" id="GO:0021559">
    <property type="term" value="P:trigeminal nerve development"/>
    <property type="evidence" value="ECO:0000250"/>
    <property type="project" value="UniProtKB"/>
</dbReference>
<dbReference type="InterPro" id="IPR004979">
    <property type="entry name" value="TF_AP2"/>
</dbReference>
<dbReference type="InterPro" id="IPR008121">
    <property type="entry name" value="TF_AP2_alpha_N"/>
</dbReference>
<dbReference type="InterPro" id="IPR013854">
    <property type="entry name" value="TF_AP2_C"/>
</dbReference>
<dbReference type="PANTHER" id="PTHR10812">
    <property type="entry name" value="TRANSCRIPTION FACTOR AP-2"/>
    <property type="match status" value="1"/>
</dbReference>
<dbReference type="PANTHER" id="PTHR10812:SF8">
    <property type="entry name" value="TRANSCRIPTION FACTOR AP-2-ALPHA"/>
    <property type="match status" value="1"/>
</dbReference>
<dbReference type="Pfam" id="PF03299">
    <property type="entry name" value="TF_AP-2"/>
    <property type="match status" value="1"/>
</dbReference>
<dbReference type="PRINTS" id="PR01749">
    <property type="entry name" value="AP2ATNSCPFCT"/>
</dbReference>
<dbReference type="PRINTS" id="PR01748">
    <property type="entry name" value="AP2TNSCPFCT"/>
</dbReference>
<accession>A1A4R9</accession>
<protein>
    <recommendedName>
        <fullName>Transcription factor AP-2-alpha</fullName>
        <shortName>AP2-alpha</shortName>
    </recommendedName>
    <alternativeName>
        <fullName>AP-2 transcription factor</fullName>
    </alternativeName>
    <alternativeName>
        <fullName>Activating enhancer-binding protein 2-alpha</fullName>
    </alternativeName>
    <alternativeName>
        <fullName>Activator protein 2</fullName>
        <shortName>AP-2</shortName>
    </alternativeName>
</protein>
<proteinExistence type="evidence at transcript level"/>
<sequence length="437" mass="47984">MLWKLTDNIKYEDCEDRHDGASNGTARLPQLGTVGQSPYTSAPPLSHTPNADFQPPYFPPPYQPIYPQSQDPYSHVNDPYSLNPLHAQPQPQHPGWPGQRQSQESGLLHTHRGLPHQLSGLDPRRDYRRHEDLLHGPHGLGSGLGDLPIHSLPHAIEDVPHVEDPGINIPDQTVIKKGPVSLSKSNSNAVSAIPINKDNLFGGVVNPNEVFCSVPGRLSLLSSTSKYKVTVAEVQRRLSPPECLNASLLGGVLRRAKSKNGGRSLREKLDKIGLNLPAGRRKAANVTLLTSLVEGEAVHLARDFGYVCETEFPAKAVAEFLNRQHSDPNEQVTRKNMLLATKQICKEFTDLLAQDRSPLGNSRPNPILEPGIQSCLTHFNLISHGFGSPAVCAAVTALQNYLTEALKAMDKMYLSNNPNSHTDNNAKSSDKEEKHRK</sequence>
<organism>
    <name type="scientific">Bos taurus</name>
    <name type="common">Bovine</name>
    <dbReference type="NCBI Taxonomy" id="9913"/>
    <lineage>
        <taxon>Eukaryota</taxon>
        <taxon>Metazoa</taxon>
        <taxon>Chordata</taxon>
        <taxon>Craniata</taxon>
        <taxon>Vertebrata</taxon>
        <taxon>Euteleostomi</taxon>
        <taxon>Mammalia</taxon>
        <taxon>Eutheria</taxon>
        <taxon>Laurasiatheria</taxon>
        <taxon>Artiodactyla</taxon>
        <taxon>Ruminantia</taxon>
        <taxon>Pecora</taxon>
        <taxon>Bovidae</taxon>
        <taxon>Bovinae</taxon>
        <taxon>Bos</taxon>
    </lineage>
</organism>
<comment type="function">
    <text evidence="1">Sequence-specific DNA-binding protein that interacts with inducible viral and cellular enhancer elements to regulate transcription of selected genes. AP-2 factors bind to the consensus sequence 5'-GCCNNNGGC-3' and activate genes involved in a large spectrum of important biological functions including proper eye, face, body wall, limb and neural tube development. They also suppress a number of genes including MCAM/MUC18, C/EBP alpha and MYC. AP-2-alpha is the only AP-2 protein required for early morphogenesis of the lens vesicle. Together with the CITED2 coactivator, stimulates the PITX2 P1 promoter transcription activation. Associates with chromatin to the PITX2 P1 promoter region (By similarity).</text>
</comment>
<comment type="subunit">
    <text evidence="1">Binds DNA as a dimer. Can form homodimers or heterodimers with other AP-2 family members. Interacts with WWOX. Interacts with CITED4. Interacts with UBE2I. Interacts with RALBP1 in a complex also containing EPN1 and NUMB during interphase and mitosis. Interacts with KCTD1; this interaction represses transcription activation. Interacts (via C-terminus) with CITED2 (via C-terminus); the interaction stimulates TFAP2A-transcriptional activation. Interacts (via N-terminus) with EP300 (via N-terminus); the interaction requires CITED2 (By similarity). Interacts with KCTD15; this interaction inhibits TFAP2A transcriptional activation (By similarity).</text>
</comment>
<comment type="subcellular location">
    <subcellularLocation>
        <location evidence="1">Nucleus</location>
    </subcellularLocation>
</comment>
<comment type="domain">
    <text evidence="1">The PPxY motif mediates interaction with WWOX.</text>
</comment>
<comment type="PTM">
    <text evidence="4">Sumoylated on Lys-10; which inhibits transcriptional activity.</text>
</comment>
<comment type="similarity">
    <text evidence="4">Belongs to the AP-2 family.</text>
</comment>
<evidence type="ECO:0000250" key="1"/>
<evidence type="ECO:0000250" key="2">
    <source>
        <dbReference type="UniProtKB" id="P05549"/>
    </source>
</evidence>
<evidence type="ECO:0000256" key="3">
    <source>
        <dbReference type="SAM" id="MobiDB-lite"/>
    </source>
</evidence>
<evidence type="ECO:0000305" key="4"/>
<reference key="1">
    <citation type="submission" date="2006-10" db="EMBL/GenBank/DDBJ databases">
        <authorList>
            <consortium name="NIH - Mammalian Gene Collection (MGC) project"/>
        </authorList>
    </citation>
    <scope>NUCLEOTIDE SEQUENCE [LARGE SCALE MRNA]</scope>
    <source>
        <strain>Hereford</strain>
        <tissue>Fetal skin</tissue>
    </source>
</reference>
<name>AP2A_BOVIN</name>
<gene>
    <name type="primary">TFAP2A</name>
</gene>
<feature type="chain" id="PRO_0000285968" description="Transcription factor AP-2-alpha">
    <location>
        <begin position="1"/>
        <end position="437"/>
    </location>
</feature>
<feature type="region of interest" description="Disordered" evidence="3">
    <location>
        <begin position="14"/>
        <end position="107"/>
    </location>
</feature>
<feature type="region of interest" description="H-S-H (helix-span-helix), dimerization" evidence="2">
    <location>
        <begin position="280"/>
        <end position="410"/>
    </location>
</feature>
<feature type="region of interest" description="Disordered" evidence="3">
    <location>
        <begin position="414"/>
        <end position="437"/>
    </location>
</feature>
<feature type="short sequence motif" description="PPxY motif">
    <location>
        <begin position="57"/>
        <end position="62"/>
    </location>
</feature>
<feature type="compositionally biased region" description="Low complexity" evidence="3">
    <location>
        <begin position="65"/>
        <end position="74"/>
    </location>
</feature>
<feature type="compositionally biased region" description="Low complexity" evidence="3">
    <location>
        <begin position="88"/>
        <end position="101"/>
    </location>
</feature>
<feature type="compositionally biased region" description="Polar residues" evidence="3">
    <location>
        <begin position="414"/>
        <end position="427"/>
    </location>
</feature>
<feature type="compositionally biased region" description="Basic and acidic residues" evidence="3">
    <location>
        <begin position="428"/>
        <end position="437"/>
    </location>
</feature>
<feature type="modified residue" description="Phosphoserine; by PKA" evidence="2">
    <location>
        <position position="239"/>
    </location>
</feature>
<feature type="cross-link" description="Glycyl lysine isopeptide (Lys-Gly) (interchain with G-Cter in SUMO); alternate" evidence="1">
    <location>
        <position position="10"/>
    </location>
</feature>
<feature type="cross-link" description="Glycyl lysine isopeptide (Lys-Gly) (interchain with G-Cter in SUMO2); alternate" evidence="2">
    <location>
        <position position="10"/>
    </location>
</feature>
<feature type="cross-link" description="Glycyl lysine isopeptide (Lys-Gly) (interchain with G-Cter in SUMO2)" evidence="2">
    <location>
        <position position="177"/>
    </location>
</feature>
<feature type="cross-link" description="Glycyl lysine isopeptide (Lys-Gly) (interchain with G-Cter in SUMO2)" evidence="2">
    <location>
        <position position="184"/>
    </location>
</feature>